<gene>
    <name type="primary">ilvI</name>
    <name type="ordered locus">BU226</name>
</gene>
<name>ILVI_BUCAI</name>
<evidence type="ECO:0000250" key="1"/>
<evidence type="ECO:0000305" key="2"/>
<feature type="chain" id="PRO_0000090791" description="Acetolactate synthase large subunit">
    <location>
        <begin position="1"/>
        <end position="571"/>
    </location>
</feature>
<feature type="region of interest" description="Thiamine pyrophosphate binding">
    <location>
        <begin position="394"/>
        <end position="474"/>
    </location>
</feature>
<feature type="binding site" evidence="1">
    <location>
        <position position="51"/>
    </location>
    <ligand>
        <name>thiamine diphosphate</name>
        <dbReference type="ChEBI" id="CHEBI:58937"/>
    </ligand>
</feature>
<feature type="binding site" evidence="1">
    <location>
        <position position="153"/>
    </location>
    <ligand>
        <name>FAD</name>
        <dbReference type="ChEBI" id="CHEBI:57692"/>
    </ligand>
</feature>
<feature type="binding site" evidence="1">
    <location>
        <begin position="261"/>
        <end position="282"/>
    </location>
    <ligand>
        <name>FAD</name>
        <dbReference type="ChEBI" id="CHEBI:57692"/>
    </ligand>
</feature>
<feature type="binding site" evidence="1">
    <location>
        <begin position="304"/>
        <end position="323"/>
    </location>
    <ligand>
        <name>FAD</name>
        <dbReference type="ChEBI" id="CHEBI:57692"/>
    </ligand>
</feature>
<feature type="binding site" evidence="1">
    <location>
        <position position="445"/>
    </location>
    <ligand>
        <name>Mg(2+)</name>
        <dbReference type="ChEBI" id="CHEBI:18420"/>
    </ligand>
</feature>
<feature type="binding site" evidence="1">
    <location>
        <position position="472"/>
    </location>
    <ligand>
        <name>Mg(2+)</name>
        <dbReference type="ChEBI" id="CHEBI:18420"/>
    </ligand>
</feature>
<dbReference type="EC" id="2.2.1.6"/>
<dbReference type="EMBL" id="BA000003">
    <property type="protein sequence ID" value="BAB12942.1"/>
    <property type="molecule type" value="Genomic_DNA"/>
</dbReference>
<dbReference type="RefSeq" id="NP_240056.1">
    <property type="nucleotide sequence ID" value="NC_002528.1"/>
</dbReference>
<dbReference type="RefSeq" id="WP_009874182.1">
    <property type="nucleotide sequence ID" value="NC_002528.1"/>
</dbReference>
<dbReference type="SMR" id="P57321"/>
<dbReference type="STRING" id="563178.BUAP5A_222"/>
<dbReference type="EnsemblBacteria" id="BAB12942">
    <property type="protein sequence ID" value="BAB12942"/>
    <property type="gene ID" value="BAB12942"/>
</dbReference>
<dbReference type="KEGG" id="buc:BU226"/>
<dbReference type="PATRIC" id="fig|107806.10.peg.239"/>
<dbReference type="eggNOG" id="COG0028">
    <property type="taxonomic scope" value="Bacteria"/>
</dbReference>
<dbReference type="HOGENOM" id="CLU_013748_1_2_6"/>
<dbReference type="UniPathway" id="UPA00047">
    <property type="reaction ID" value="UER00055"/>
</dbReference>
<dbReference type="UniPathway" id="UPA00049">
    <property type="reaction ID" value="UER00059"/>
</dbReference>
<dbReference type="Proteomes" id="UP000001806">
    <property type="component" value="Chromosome"/>
</dbReference>
<dbReference type="GO" id="GO:0005948">
    <property type="term" value="C:acetolactate synthase complex"/>
    <property type="evidence" value="ECO:0007669"/>
    <property type="project" value="TreeGrafter"/>
</dbReference>
<dbReference type="GO" id="GO:0003984">
    <property type="term" value="F:acetolactate synthase activity"/>
    <property type="evidence" value="ECO:0007669"/>
    <property type="project" value="UniProtKB-EC"/>
</dbReference>
<dbReference type="GO" id="GO:0050660">
    <property type="term" value="F:flavin adenine dinucleotide binding"/>
    <property type="evidence" value="ECO:0007669"/>
    <property type="project" value="InterPro"/>
</dbReference>
<dbReference type="GO" id="GO:0000287">
    <property type="term" value="F:magnesium ion binding"/>
    <property type="evidence" value="ECO:0007669"/>
    <property type="project" value="InterPro"/>
</dbReference>
<dbReference type="GO" id="GO:0030976">
    <property type="term" value="F:thiamine pyrophosphate binding"/>
    <property type="evidence" value="ECO:0007669"/>
    <property type="project" value="InterPro"/>
</dbReference>
<dbReference type="GO" id="GO:0009097">
    <property type="term" value="P:isoleucine biosynthetic process"/>
    <property type="evidence" value="ECO:0007669"/>
    <property type="project" value="UniProtKB-UniPathway"/>
</dbReference>
<dbReference type="GO" id="GO:0009099">
    <property type="term" value="P:L-valine biosynthetic process"/>
    <property type="evidence" value="ECO:0007669"/>
    <property type="project" value="UniProtKB-UniPathway"/>
</dbReference>
<dbReference type="CDD" id="cd02015">
    <property type="entry name" value="TPP_AHAS"/>
    <property type="match status" value="1"/>
</dbReference>
<dbReference type="CDD" id="cd07035">
    <property type="entry name" value="TPP_PYR_POX_like"/>
    <property type="match status" value="1"/>
</dbReference>
<dbReference type="FunFam" id="3.40.50.1220:FF:000008">
    <property type="entry name" value="Acetolactate synthase"/>
    <property type="match status" value="1"/>
</dbReference>
<dbReference type="FunFam" id="3.40.50.970:FF:000007">
    <property type="entry name" value="Acetolactate synthase"/>
    <property type="match status" value="1"/>
</dbReference>
<dbReference type="FunFam" id="3.40.50.970:FF:000016">
    <property type="entry name" value="Acetolactate synthase"/>
    <property type="match status" value="1"/>
</dbReference>
<dbReference type="Gene3D" id="3.40.50.970">
    <property type="match status" value="2"/>
</dbReference>
<dbReference type="Gene3D" id="3.40.50.1220">
    <property type="entry name" value="TPP-binding domain"/>
    <property type="match status" value="1"/>
</dbReference>
<dbReference type="InterPro" id="IPR012846">
    <property type="entry name" value="Acetolactate_synth_lsu"/>
</dbReference>
<dbReference type="InterPro" id="IPR039368">
    <property type="entry name" value="AHAS_TPP"/>
</dbReference>
<dbReference type="InterPro" id="IPR029035">
    <property type="entry name" value="DHS-like_NAD/FAD-binding_dom"/>
</dbReference>
<dbReference type="InterPro" id="IPR029061">
    <property type="entry name" value="THDP-binding"/>
</dbReference>
<dbReference type="InterPro" id="IPR012000">
    <property type="entry name" value="Thiamin_PyroP_enz_cen_dom"/>
</dbReference>
<dbReference type="InterPro" id="IPR012001">
    <property type="entry name" value="Thiamin_PyroP_enz_TPP-bd_dom"/>
</dbReference>
<dbReference type="InterPro" id="IPR000399">
    <property type="entry name" value="TPP-bd_CS"/>
</dbReference>
<dbReference type="InterPro" id="IPR045229">
    <property type="entry name" value="TPP_enz"/>
</dbReference>
<dbReference type="InterPro" id="IPR011766">
    <property type="entry name" value="TPP_enzyme_TPP-bd"/>
</dbReference>
<dbReference type="NCBIfam" id="TIGR00118">
    <property type="entry name" value="acolac_lg"/>
    <property type="match status" value="1"/>
</dbReference>
<dbReference type="NCBIfam" id="NF005058">
    <property type="entry name" value="PRK06466.1"/>
    <property type="match status" value="1"/>
</dbReference>
<dbReference type="PANTHER" id="PTHR18968:SF13">
    <property type="entry name" value="ACETOLACTATE SYNTHASE CATALYTIC SUBUNIT, MITOCHONDRIAL"/>
    <property type="match status" value="1"/>
</dbReference>
<dbReference type="PANTHER" id="PTHR18968">
    <property type="entry name" value="THIAMINE PYROPHOSPHATE ENZYMES"/>
    <property type="match status" value="1"/>
</dbReference>
<dbReference type="Pfam" id="PF02775">
    <property type="entry name" value="TPP_enzyme_C"/>
    <property type="match status" value="1"/>
</dbReference>
<dbReference type="Pfam" id="PF00205">
    <property type="entry name" value="TPP_enzyme_M"/>
    <property type="match status" value="1"/>
</dbReference>
<dbReference type="Pfam" id="PF02776">
    <property type="entry name" value="TPP_enzyme_N"/>
    <property type="match status" value="1"/>
</dbReference>
<dbReference type="SUPFAM" id="SSF52467">
    <property type="entry name" value="DHS-like NAD/FAD-binding domain"/>
    <property type="match status" value="1"/>
</dbReference>
<dbReference type="SUPFAM" id="SSF52518">
    <property type="entry name" value="Thiamin diphosphate-binding fold (THDP-binding)"/>
    <property type="match status" value="2"/>
</dbReference>
<dbReference type="PROSITE" id="PS00187">
    <property type="entry name" value="TPP_ENZYMES"/>
    <property type="match status" value="1"/>
</dbReference>
<organism>
    <name type="scientific">Buchnera aphidicola subsp. Acyrthosiphon pisum (strain APS)</name>
    <name type="common">Acyrthosiphon pisum symbiotic bacterium</name>
    <dbReference type="NCBI Taxonomy" id="107806"/>
    <lineage>
        <taxon>Bacteria</taxon>
        <taxon>Pseudomonadati</taxon>
        <taxon>Pseudomonadota</taxon>
        <taxon>Gammaproteobacteria</taxon>
        <taxon>Enterobacterales</taxon>
        <taxon>Erwiniaceae</taxon>
        <taxon>Buchnera</taxon>
    </lineage>
</organism>
<protein>
    <recommendedName>
        <fullName>Acetolactate synthase large subunit</fullName>
        <shortName>AHAS</shortName>
        <ecNumber>2.2.1.6</ecNumber>
    </recommendedName>
    <alternativeName>
        <fullName>Acetohydroxy-acid synthase large subunit</fullName>
        <shortName>ALS</shortName>
    </alternativeName>
</protein>
<accession>P57321</accession>
<reference key="1">
    <citation type="journal article" date="2000" name="Nature">
        <title>Genome sequence of the endocellular bacterial symbiont of aphids Buchnera sp. APS.</title>
        <authorList>
            <person name="Shigenobu S."/>
            <person name="Watanabe H."/>
            <person name="Hattori M."/>
            <person name="Sakaki Y."/>
            <person name="Ishikawa H."/>
        </authorList>
    </citation>
    <scope>NUCLEOTIDE SEQUENCE [LARGE SCALE GENOMIC DNA]</scope>
    <source>
        <strain>APS</strain>
    </source>
</reference>
<keyword id="KW-0028">Amino-acid biosynthesis</keyword>
<keyword id="KW-0100">Branched-chain amino acid biosynthesis</keyword>
<keyword id="KW-0274">FAD</keyword>
<keyword id="KW-0285">Flavoprotein</keyword>
<keyword id="KW-0460">Magnesium</keyword>
<keyword id="KW-0479">Metal-binding</keyword>
<keyword id="KW-1185">Reference proteome</keyword>
<keyword id="KW-0786">Thiamine pyrophosphate</keyword>
<keyword id="KW-0808">Transferase</keyword>
<proteinExistence type="inferred from homology"/>
<sequence>MEILSGAEMVVRSLIDQGIQHIFGYPGGAVLDIYDALKTVGGIEHILVRHEQAATHMADGYSRSTGKTGVVLVTSGPGATNAITGIATAYMDSIPMVVISGQVASSLIGYDAFQECDMIGISRPIVKHSFLVKKTEDIPIVFKKAFWLASSGRPGPIVIDLPKDILKKDNKYLYKWPDNINIRSYNPTTKGHIGQIKKALHTLLKAQRPVIYAGGGIISSNSSEELRIFAEKINCPVTTSLMGLGSFPGTHDQNISMLGMHGTYEANMTMHHADVIFAIGVRFDDRTTNNLNKYCPNAIVLHVDIDPTSISKTVSANIPIVGDAKHVLQKMIELLKKEKKISLLEDWWNTIKKWKKINSLQYNQLSNKIKPQTVIKTLFKLTKGTSYITSDVGQHQMFTALYYPFNKPRRWINSGGLGTMGFGLPAALGVKLALPKETVICITGDGSIQMNIQELSTARQYNLAVLILNLNNSSLGMVKQWQDMIYSGRHSHSYMDSLPDFVKLSESYGHFGIQITEPIELEEKLMLALSKLSDGHLVFVDVQIDNSEHVYPMQIQGGGMNEMRLRKKEVA</sequence>
<comment type="catalytic activity">
    <reaction>
        <text>2 pyruvate + H(+) = (2S)-2-acetolactate + CO2</text>
        <dbReference type="Rhea" id="RHEA:25249"/>
        <dbReference type="ChEBI" id="CHEBI:15361"/>
        <dbReference type="ChEBI" id="CHEBI:15378"/>
        <dbReference type="ChEBI" id="CHEBI:16526"/>
        <dbReference type="ChEBI" id="CHEBI:58476"/>
        <dbReference type="EC" id="2.2.1.6"/>
    </reaction>
</comment>
<comment type="cofactor">
    <cofactor evidence="1">
        <name>Mg(2+)</name>
        <dbReference type="ChEBI" id="CHEBI:18420"/>
    </cofactor>
    <text evidence="1">Binds 1 Mg(2+) ion per subunit.</text>
</comment>
<comment type="cofactor">
    <cofactor evidence="1">
        <name>thiamine diphosphate</name>
        <dbReference type="ChEBI" id="CHEBI:58937"/>
    </cofactor>
    <text evidence="1">Binds 1 thiamine pyrophosphate per subunit.</text>
</comment>
<comment type="pathway">
    <text>Amino-acid biosynthesis; L-isoleucine biosynthesis; L-isoleucine from 2-oxobutanoate: step 1/4.</text>
</comment>
<comment type="pathway">
    <text>Amino-acid biosynthesis; L-valine biosynthesis; L-valine from pyruvate: step 1/4.</text>
</comment>
<comment type="subunit">
    <text evidence="1">Dimer of large and small chains.</text>
</comment>
<comment type="miscellaneous">
    <text evidence="1">Contains 1 molecule of FAD per monomer. The role of this cofactor is not clear considering that the reaction does not involve redox chemistry (By similarity).</text>
</comment>
<comment type="similarity">
    <text evidence="2">Belongs to the TPP enzyme family.</text>
</comment>